<dbReference type="EC" id="7.4.2.8" evidence="1"/>
<dbReference type="EMBL" id="CP001089">
    <property type="protein sequence ID" value="ACD96204.1"/>
    <property type="molecule type" value="Genomic_DNA"/>
</dbReference>
<dbReference type="RefSeq" id="WP_012470537.1">
    <property type="nucleotide sequence ID" value="NC_010814.1"/>
</dbReference>
<dbReference type="SMR" id="B3E5W3"/>
<dbReference type="STRING" id="398767.Glov_2490"/>
<dbReference type="KEGG" id="glo:Glov_2490"/>
<dbReference type="eggNOG" id="COG0653">
    <property type="taxonomic scope" value="Bacteria"/>
</dbReference>
<dbReference type="HOGENOM" id="CLU_005314_3_0_7"/>
<dbReference type="OrthoDB" id="9805579at2"/>
<dbReference type="Proteomes" id="UP000002420">
    <property type="component" value="Chromosome"/>
</dbReference>
<dbReference type="GO" id="GO:0031522">
    <property type="term" value="C:cell envelope Sec protein transport complex"/>
    <property type="evidence" value="ECO:0007669"/>
    <property type="project" value="TreeGrafter"/>
</dbReference>
<dbReference type="GO" id="GO:0005829">
    <property type="term" value="C:cytosol"/>
    <property type="evidence" value="ECO:0007669"/>
    <property type="project" value="TreeGrafter"/>
</dbReference>
<dbReference type="GO" id="GO:0005886">
    <property type="term" value="C:plasma membrane"/>
    <property type="evidence" value="ECO:0007669"/>
    <property type="project" value="UniProtKB-SubCell"/>
</dbReference>
<dbReference type="GO" id="GO:0005524">
    <property type="term" value="F:ATP binding"/>
    <property type="evidence" value="ECO:0007669"/>
    <property type="project" value="UniProtKB-UniRule"/>
</dbReference>
<dbReference type="GO" id="GO:0046872">
    <property type="term" value="F:metal ion binding"/>
    <property type="evidence" value="ECO:0007669"/>
    <property type="project" value="UniProtKB-KW"/>
</dbReference>
<dbReference type="GO" id="GO:0008564">
    <property type="term" value="F:protein-exporting ATPase activity"/>
    <property type="evidence" value="ECO:0007669"/>
    <property type="project" value="UniProtKB-EC"/>
</dbReference>
<dbReference type="GO" id="GO:0065002">
    <property type="term" value="P:intracellular protein transmembrane transport"/>
    <property type="evidence" value="ECO:0007669"/>
    <property type="project" value="UniProtKB-UniRule"/>
</dbReference>
<dbReference type="GO" id="GO:0017038">
    <property type="term" value="P:protein import"/>
    <property type="evidence" value="ECO:0007669"/>
    <property type="project" value="InterPro"/>
</dbReference>
<dbReference type="GO" id="GO:0006605">
    <property type="term" value="P:protein targeting"/>
    <property type="evidence" value="ECO:0007669"/>
    <property type="project" value="UniProtKB-UniRule"/>
</dbReference>
<dbReference type="GO" id="GO:0043952">
    <property type="term" value="P:protein transport by the Sec complex"/>
    <property type="evidence" value="ECO:0007669"/>
    <property type="project" value="TreeGrafter"/>
</dbReference>
<dbReference type="CDD" id="cd17928">
    <property type="entry name" value="DEXDc_SecA"/>
    <property type="match status" value="1"/>
</dbReference>
<dbReference type="CDD" id="cd18803">
    <property type="entry name" value="SF2_C_secA"/>
    <property type="match status" value="1"/>
</dbReference>
<dbReference type="FunFam" id="3.40.50.300:FF:000113">
    <property type="entry name" value="Preprotein translocase subunit SecA"/>
    <property type="match status" value="1"/>
</dbReference>
<dbReference type="FunFam" id="3.40.50.300:FF:000246">
    <property type="entry name" value="Preprotein translocase subunit SecA"/>
    <property type="match status" value="1"/>
</dbReference>
<dbReference type="FunFam" id="3.90.1440.10:FF:000001">
    <property type="entry name" value="Preprotein translocase subunit SecA"/>
    <property type="match status" value="1"/>
</dbReference>
<dbReference type="FunFam" id="1.10.3060.10:FF:000003">
    <property type="entry name" value="Protein translocase subunit SecA"/>
    <property type="match status" value="1"/>
</dbReference>
<dbReference type="FunFam" id="3.40.50.300:FF:000334">
    <property type="entry name" value="Protein translocase subunit SecA"/>
    <property type="match status" value="1"/>
</dbReference>
<dbReference type="Gene3D" id="1.10.3060.10">
    <property type="entry name" value="Helical scaffold and wing domains of SecA"/>
    <property type="match status" value="1"/>
</dbReference>
<dbReference type="Gene3D" id="3.40.50.300">
    <property type="entry name" value="P-loop containing nucleotide triphosphate hydrolases"/>
    <property type="match status" value="2"/>
</dbReference>
<dbReference type="Gene3D" id="3.90.1440.10">
    <property type="entry name" value="SecA, preprotein cross-linking domain"/>
    <property type="match status" value="1"/>
</dbReference>
<dbReference type="HAMAP" id="MF_01382">
    <property type="entry name" value="SecA"/>
    <property type="match status" value="1"/>
</dbReference>
<dbReference type="InterPro" id="IPR014001">
    <property type="entry name" value="Helicase_ATP-bd"/>
</dbReference>
<dbReference type="InterPro" id="IPR001650">
    <property type="entry name" value="Helicase_C-like"/>
</dbReference>
<dbReference type="InterPro" id="IPR027417">
    <property type="entry name" value="P-loop_NTPase"/>
</dbReference>
<dbReference type="InterPro" id="IPR004027">
    <property type="entry name" value="SEC_C_motif"/>
</dbReference>
<dbReference type="InterPro" id="IPR000185">
    <property type="entry name" value="SecA"/>
</dbReference>
<dbReference type="InterPro" id="IPR020937">
    <property type="entry name" value="SecA_CS"/>
</dbReference>
<dbReference type="InterPro" id="IPR011115">
    <property type="entry name" value="SecA_DEAD"/>
</dbReference>
<dbReference type="InterPro" id="IPR014018">
    <property type="entry name" value="SecA_motor_DEAD"/>
</dbReference>
<dbReference type="InterPro" id="IPR011130">
    <property type="entry name" value="SecA_preprotein_X-link_dom"/>
</dbReference>
<dbReference type="InterPro" id="IPR044722">
    <property type="entry name" value="SecA_SF2_C"/>
</dbReference>
<dbReference type="InterPro" id="IPR011116">
    <property type="entry name" value="SecA_Wing/Scaffold"/>
</dbReference>
<dbReference type="InterPro" id="IPR036266">
    <property type="entry name" value="SecA_Wing/Scaffold_sf"/>
</dbReference>
<dbReference type="InterPro" id="IPR036670">
    <property type="entry name" value="SecA_X-link_sf"/>
</dbReference>
<dbReference type="NCBIfam" id="NF009538">
    <property type="entry name" value="PRK12904.1"/>
    <property type="match status" value="1"/>
</dbReference>
<dbReference type="NCBIfam" id="TIGR00963">
    <property type="entry name" value="secA"/>
    <property type="match status" value="1"/>
</dbReference>
<dbReference type="PANTHER" id="PTHR30612:SF0">
    <property type="entry name" value="CHLOROPLAST PROTEIN-TRANSPORTING ATPASE"/>
    <property type="match status" value="1"/>
</dbReference>
<dbReference type="PANTHER" id="PTHR30612">
    <property type="entry name" value="SECA INNER MEMBRANE COMPONENT OF SEC PROTEIN SECRETION SYSTEM"/>
    <property type="match status" value="1"/>
</dbReference>
<dbReference type="Pfam" id="PF21090">
    <property type="entry name" value="P-loop_SecA"/>
    <property type="match status" value="1"/>
</dbReference>
<dbReference type="Pfam" id="PF02810">
    <property type="entry name" value="SEC-C"/>
    <property type="match status" value="1"/>
</dbReference>
<dbReference type="Pfam" id="PF07517">
    <property type="entry name" value="SecA_DEAD"/>
    <property type="match status" value="1"/>
</dbReference>
<dbReference type="Pfam" id="PF01043">
    <property type="entry name" value="SecA_PP_bind"/>
    <property type="match status" value="1"/>
</dbReference>
<dbReference type="Pfam" id="PF07516">
    <property type="entry name" value="SecA_SW"/>
    <property type="match status" value="1"/>
</dbReference>
<dbReference type="PRINTS" id="PR00906">
    <property type="entry name" value="SECA"/>
</dbReference>
<dbReference type="SMART" id="SM00957">
    <property type="entry name" value="SecA_DEAD"/>
    <property type="match status" value="1"/>
</dbReference>
<dbReference type="SMART" id="SM00958">
    <property type="entry name" value="SecA_PP_bind"/>
    <property type="match status" value="1"/>
</dbReference>
<dbReference type="SUPFAM" id="SSF81886">
    <property type="entry name" value="Helical scaffold and wing domains of SecA"/>
    <property type="match status" value="1"/>
</dbReference>
<dbReference type="SUPFAM" id="SSF52540">
    <property type="entry name" value="P-loop containing nucleoside triphosphate hydrolases"/>
    <property type="match status" value="2"/>
</dbReference>
<dbReference type="SUPFAM" id="SSF81767">
    <property type="entry name" value="Pre-protein crosslinking domain of SecA"/>
    <property type="match status" value="1"/>
</dbReference>
<dbReference type="PROSITE" id="PS01312">
    <property type="entry name" value="SECA"/>
    <property type="match status" value="1"/>
</dbReference>
<dbReference type="PROSITE" id="PS51196">
    <property type="entry name" value="SECA_MOTOR_DEAD"/>
    <property type="match status" value="1"/>
</dbReference>
<comment type="function">
    <text evidence="1">Part of the Sec protein translocase complex. Interacts with the SecYEG preprotein conducting channel. Has a central role in coupling the hydrolysis of ATP to the transfer of proteins into and across the cell membrane, serving as an ATP-driven molecular motor driving the stepwise translocation of polypeptide chains across the membrane.</text>
</comment>
<comment type="catalytic activity">
    <reaction evidence="1">
        <text>ATP + H2O + cellular proteinSide 1 = ADP + phosphate + cellular proteinSide 2.</text>
        <dbReference type="EC" id="7.4.2.8"/>
    </reaction>
</comment>
<comment type="cofactor">
    <cofactor evidence="1">
        <name>Zn(2+)</name>
        <dbReference type="ChEBI" id="CHEBI:29105"/>
    </cofactor>
    <text evidence="1">May bind 1 zinc ion per subunit.</text>
</comment>
<comment type="subunit">
    <text evidence="1">Monomer and homodimer. Part of the essential Sec protein translocation apparatus which comprises SecA, SecYEG and auxiliary proteins SecDF-YajC and YidC.</text>
</comment>
<comment type="subcellular location">
    <subcellularLocation>
        <location evidence="1">Cell inner membrane</location>
        <topology evidence="1">Peripheral membrane protein</topology>
        <orientation evidence="1">Cytoplasmic side</orientation>
    </subcellularLocation>
    <subcellularLocation>
        <location evidence="1">Cytoplasm</location>
    </subcellularLocation>
    <text evidence="1">Distribution is 50-50.</text>
</comment>
<comment type="similarity">
    <text evidence="1">Belongs to the SecA family.</text>
</comment>
<protein>
    <recommendedName>
        <fullName evidence="1">Protein translocase subunit SecA</fullName>
        <ecNumber evidence="1">7.4.2.8</ecNumber>
    </recommendedName>
</protein>
<name>SECA_TRIL1</name>
<proteinExistence type="inferred from homology"/>
<sequence length="899" mass="102570">MLSTLIRKVIGSKNERELKRLWPIVAKINSLEPQMQALSDEELRGKTAEFKERYSKGESLDALLPEAFAVCREGGRRELGMRHFDVQLIGGMTLHAGKIAEMKTGEGKTLVATLAAYLNAISGKGVHVVTVNDYLARRDSEWMGRLYGFLGLTTGVIVHGLDDEQRRANYAADITYGTNNEFGFDYLRDNMKFSLDDYVQRGFNFAVVDEVDSILIDEARTPLIISGPTEESTDKYYVINQIIPRLEQGEVKEVEANTLSGKKKVYTGDFTIDEKAKSATLTEQGVSKVEKLLKIENLYDPRNIETLHHVNQALRAHAMYRRDVDYVVKDGEVLIVDEFTGRLMPGRRWSDGLHQAVEAKEGVRIESENQTLATITFQNYFRMYAKLSGMTGTADTEAEEFHKIYKLDVTVIPTNRPLLRPDYPDVIYKTEQEKFAAVISDIKEHYEKGQPCLVGTISIEKSEVLSELLRKQGIPHFVLNAKQHEKEAEIVAQAGRKKAITIATNMAGRGTDIVLGGNPDSLLKQWRLANPEATAEQAAAMLEQYRQQCAAEHDEVVALGGLHIIGTERHESRRIDNQLRGRSGRQGDPGSSRFYLSLQDDLLRIFGSERVAKIMDFLKIEEGEAITHAMINKSIENAQKKVEAHNFEIRKHLIDYDDVMNKQREVIYTQRREILAGEDIRESFLEMLDDTISDIVKAYAFEKDAPLEWDWESLSETVFRCFSIQLELSREMIARLNADGLQKMLQEQAHESIKRRADELGDELMDHLIRVVMLQAIDVHWKDHLLNIDHLKEGIGLRSYGQKDPKQEYKKEAYQLFMEMIIRIREETVEKVFWVQIEKEEDIEELEEEQVERSRKMFKAITVNDDEHPAEPAKSQKNAGRNEPCPCGSGKKYKKCCGK</sequence>
<reference key="1">
    <citation type="submission" date="2008-05" db="EMBL/GenBank/DDBJ databases">
        <title>Complete sequence of chromosome of Geobacter lovleyi SZ.</title>
        <authorList>
            <consortium name="US DOE Joint Genome Institute"/>
            <person name="Lucas S."/>
            <person name="Copeland A."/>
            <person name="Lapidus A."/>
            <person name="Glavina del Rio T."/>
            <person name="Dalin E."/>
            <person name="Tice H."/>
            <person name="Bruce D."/>
            <person name="Goodwin L."/>
            <person name="Pitluck S."/>
            <person name="Chertkov O."/>
            <person name="Meincke L."/>
            <person name="Brettin T."/>
            <person name="Detter J.C."/>
            <person name="Han C."/>
            <person name="Tapia R."/>
            <person name="Kuske C.R."/>
            <person name="Schmutz J."/>
            <person name="Larimer F."/>
            <person name="Land M."/>
            <person name="Hauser L."/>
            <person name="Kyrpides N."/>
            <person name="Mikhailova N."/>
            <person name="Sung Y."/>
            <person name="Fletcher K.E."/>
            <person name="Ritalahti K.M."/>
            <person name="Loeffler F.E."/>
            <person name="Richardson P."/>
        </authorList>
    </citation>
    <scope>NUCLEOTIDE SEQUENCE [LARGE SCALE GENOMIC DNA]</scope>
    <source>
        <strain>ATCC BAA-1151 / DSM 17278 / SZ</strain>
    </source>
</reference>
<accession>B3E5W3</accession>
<keyword id="KW-0067">ATP-binding</keyword>
<keyword id="KW-0997">Cell inner membrane</keyword>
<keyword id="KW-1003">Cell membrane</keyword>
<keyword id="KW-0963">Cytoplasm</keyword>
<keyword id="KW-0472">Membrane</keyword>
<keyword id="KW-0479">Metal-binding</keyword>
<keyword id="KW-0547">Nucleotide-binding</keyword>
<keyword id="KW-0653">Protein transport</keyword>
<keyword id="KW-1185">Reference proteome</keyword>
<keyword id="KW-1278">Translocase</keyword>
<keyword id="KW-0811">Translocation</keyword>
<keyword id="KW-0813">Transport</keyword>
<keyword id="KW-0862">Zinc</keyword>
<gene>
    <name evidence="1" type="primary">secA</name>
    <name type="ordered locus">Glov_2490</name>
</gene>
<evidence type="ECO:0000255" key="1">
    <source>
        <dbReference type="HAMAP-Rule" id="MF_01382"/>
    </source>
</evidence>
<evidence type="ECO:0000256" key="2">
    <source>
        <dbReference type="SAM" id="MobiDB-lite"/>
    </source>
</evidence>
<organism>
    <name type="scientific">Trichlorobacter lovleyi (strain ATCC BAA-1151 / DSM 17278 / SZ)</name>
    <name type="common">Geobacter lovleyi</name>
    <dbReference type="NCBI Taxonomy" id="398767"/>
    <lineage>
        <taxon>Bacteria</taxon>
        <taxon>Pseudomonadati</taxon>
        <taxon>Thermodesulfobacteriota</taxon>
        <taxon>Desulfuromonadia</taxon>
        <taxon>Geobacterales</taxon>
        <taxon>Geobacteraceae</taxon>
        <taxon>Trichlorobacter</taxon>
    </lineage>
</organism>
<feature type="chain" id="PRO_1000145018" description="Protein translocase subunit SecA">
    <location>
        <begin position="1"/>
        <end position="899"/>
    </location>
</feature>
<feature type="region of interest" description="Disordered" evidence="2">
    <location>
        <begin position="573"/>
        <end position="592"/>
    </location>
</feature>
<feature type="region of interest" description="Disordered" evidence="2">
    <location>
        <begin position="861"/>
        <end position="899"/>
    </location>
</feature>
<feature type="binding site" evidence="1">
    <location>
        <position position="87"/>
    </location>
    <ligand>
        <name>ATP</name>
        <dbReference type="ChEBI" id="CHEBI:30616"/>
    </ligand>
</feature>
<feature type="binding site" evidence="1">
    <location>
        <begin position="105"/>
        <end position="109"/>
    </location>
    <ligand>
        <name>ATP</name>
        <dbReference type="ChEBI" id="CHEBI:30616"/>
    </ligand>
</feature>
<feature type="binding site" evidence="1">
    <location>
        <position position="512"/>
    </location>
    <ligand>
        <name>ATP</name>
        <dbReference type="ChEBI" id="CHEBI:30616"/>
    </ligand>
</feature>
<feature type="binding site" evidence="1">
    <location>
        <position position="885"/>
    </location>
    <ligand>
        <name>Zn(2+)</name>
        <dbReference type="ChEBI" id="CHEBI:29105"/>
    </ligand>
</feature>
<feature type="binding site" evidence="1">
    <location>
        <position position="887"/>
    </location>
    <ligand>
        <name>Zn(2+)</name>
        <dbReference type="ChEBI" id="CHEBI:29105"/>
    </ligand>
</feature>
<feature type="binding site" evidence="1">
    <location>
        <position position="896"/>
    </location>
    <ligand>
        <name>Zn(2+)</name>
        <dbReference type="ChEBI" id="CHEBI:29105"/>
    </ligand>
</feature>
<feature type="binding site" evidence="1">
    <location>
        <position position="897"/>
    </location>
    <ligand>
        <name>Zn(2+)</name>
        <dbReference type="ChEBI" id="CHEBI:29105"/>
    </ligand>
</feature>